<accession>Q9PGS5</accession>
<protein>
    <recommendedName>
        <fullName evidence="1">Queuine tRNA-ribosyltransferase</fullName>
        <ecNumber evidence="1">2.4.2.29</ecNumber>
    </recommendedName>
    <alternativeName>
        <fullName evidence="1">Guanine insertion enzyme</fullName>
    </alternativeName>
    <alternativeName>
        <fullName evidence="1">tRNA-guanine transglycosylase</fullName>
    </alternativeName>
</protein>
<feature type="chain" id="PRO_0000135559" description="Queuine tRNA-ribosyltransferase">
    <location>
        <begin position="1"/>
        <end position="384"/>
    </location>
</feature>
<feature type="region of interest" description="RNA binding" evidence="1">
    <location>
        <begin position="248"/>
        <end position="254"/>
    </location>
</feature>
<feature type="region of interest" description="RNA binding; important for wobble base 34 recognition" evidence="1">
    <location>
        <begin position="272"/>
        <end position="276"/>
    </location>
</feature>
<feature type="active site" description="Proton acceptor" evidence="1">
    <location>
        <position position="92"/>
    </location>
</feature>
<feature type="active site" description="Nucleophile" evidence="1">
    <location>
        <position position="267"/>
    </location>
</feature>
<feature type="binding site" evidence="1">
    <location>
        <begin position="92"/>
        <end position="96"/>
    </location>
    <ligand>
        <name>substrate</name>
    </ligand>
</feature>
<feature type="binding site" evidence="1">
    <location>
        <position position="146"/>
    </location>
    <ligand>
        <name>substrate</name>
    </ligand>
</feature>
<feature type="binding site" evidence="1">
    <location>
        <position position="190"/>
    </location>
    <ligand>
        <name>substrate</name>
    </ligand>
</feature>
<feature type="binding site" evidence="1">
    <location>
        <position position="217"/>
    </location>
    <ligand>
        <name>substrate</name>
    </ligand>
</feature>
<feature type="binding site" evidence="1">
    <location>
        <position position="305"/>
    </location>
    <ligand>
        <name>Zn(2+)</name>
        <dbReference type="ChEBI" id="CHEBI:29105"/>
    </ligand>
</feature>
<feature type="binding site" evidence="1">
    <location>
        <position position="307"/>
    </location>
    <ligand>
        <name>Zn(2+)</name>
        <dbReference type="ChEBI" id="CHEBI:29105"/>
    </ligand>
</feature>
<feature type="binding site" evidence="1">
    <location>
        <position position="310"/>
    </location>
    <ligand>
        <name>Zn(2+)</name>
        <dbReference type="ChEBI" id="CHEBI:29105"/>
    </ligand>
</feature>
<feature type="binding site" evidence="1">
    <location>
        <position position="337"/>
    </location>
    <ligand>
        <name>Zn(2+)</name>
        <dbReference type="ChEBI" id="CHEBI:29105"/>
    </ligand>
</feature>
<organism>
    <name type="scientific">Xylella fastidiosa (strain 9a5c)</name>
    <dbReference type="NCBI Taxonomy" id="160492"/>
    <lineage>
        <taxon>Bacteria</taxon>
        <taxon>Pseudomonadati</taxon>
        <taxon>Pseudomonadota</taxon>
        <taxon>Gammaproteobacteria</taxon>
        <taxon>Lysobacterales</taxon>
        <taxon>Lysobacteraceae</taxon>
        <taxon>Xylella</taxon>
    </lineage>
</organism>
<comment type="function">
    <text evidence="1">Catalyzes the base-exchange of a guanine (G) residue with the queuine precursor 7-aminomethyl-7-deazaguanine (PreQ1) at position 34 (anticodon wobble position) in tRNAs with GU(N) anticodons (tRNA-Asp, -Asn, -His and -Tyr). Catalysis occurs through a double-displacement mechanism. The nucleophile active site attacks the C1' of nucleotide 34 to detach the guanine base from the RNA, forming a covalent enzyme-RNA intermediate. The proton acceptor active site deprotonates the incoming PreQ1, allowing a nucleophilic attack on the C1' of the ribose to form the product. After dissociation, two additional enzymatic reactions on the tRNA convert PreQ1 to queuine (Q), resulting in the hypermodified nucleoside queuosine (7-(((4,5-cis-dihydroxy-2-cyclopenten-1-yl)amino)methyl)-7-deazaguanosine).</text>
</comment>
<comment type="catalytic activity">
    <reaction evidence="1">
        <text>7-aminomethyl-7-carbaguanine + guanosine(34) in tRNA = 7-aminomethyl-7-carbaguanosine(34) in tRNA + guanine</text>
        <dbReference type="Rhea" id="RHEA:24104"/>
        <dbReference type="Rhea" id="RHEA-COMP:10341"/>
        <dbReference type="Rhea" id="RHEA-COMP:10342"/>
        <dbReference type="ChEBI" id="CHEBI:16235"/>
        <dbReference type="ChEBI" id="CHEBI:58703"/>
        <dbReference type="ChEBI" id="CHEBI:74269"/>
        <dbReference type="ChEBI" id="CHEBI:82833"/>
        <dbReference type="EC" id="2.4.2.29"/>
    </reaction>
</comment>
<comment type="cofactor">
    <cofactor evidence="1">
        <name>Zn(2+)</name>
        <dbReference type="ChEBI" id="CHEBI:29105"/>
    </cofactor>
    <text evidence="1">Binds 1 zinc ion per subunit.</text>
</comment>
<comment type="pathway">
    <text evidence="1">tRNA modification; tRNA-queuosine biosynthesis.</text>
</comment>
<comment type="subunit">
    <text evidence="1">Homodimer. Within each dimer, one monomer is responsible for RNA recognition and catalysis, while the other monomer binds to the replacement base PreQ1.</text>
</comment>
<comment type="similarity">
    <text evidence="1">Belongs to the queuine tRNA-ribosyltransferase family.</text>
</comment>
<comment type="sequence caution" evidence="2">
    <conflict type="erroneous initiation">
        <sequence resource="EMBL-CDS" id="AAF83036"/>
    </conflict>
</comment>
<gene>
    <name evidence="1" type="primary">tgt</name>
    <name type="ordered locus">XF_0223</name>
</gene>
<proteinExistence type="inferred from homology"/>
<dbReference type="EC" id="2.4.2.29" evidence="1"/>
<dbReference type="EMBL" id="AE003849">
    <property type="protein sequence ID" value="AAF83036.1"/>
    <property type="status" value="ALT_INIT"/>
    <property type="molecule type" value="Genomic_DNA"/>
</dbReference>
<dbReference type="PIR" id="G82831">
    <property type="entry name" value="G82831"/>
</dbReference>
<dbReference type="RefSeq" id="WP_010892764.1">
    <property type="nucleotide sequence ID" value="NC_002488.3"/>
</dbReference>
<dbReference type="SMR" id="Q9PGS5"/>
<dbReference type="STRING" id="160492.XF_0223"/>
<dbReference type="KEGG" id="xfa:XF_0223"/>
<dbReference type="eggNOG" id="COG0343">
    <property type="taxonomic scope" value="Bacteria"/>
</dbReference>
<dbReference type="HOGENOM" id="CLU_022060_0_1_6"/>
<dbReference type="UniPathway" id="UPA00392"/>
<dbReference type="Proteomes" id="UP000000812">
    <property type="component" value="Chromosome"/>
</dbReference>
<dbReference type="GO" id="GO:0005829">
    <property type="term" value="C:cytosol"/>
    <property type="evidence" value="ECO:0007669"/>
    <property type="project" value="TreeGrafter"/>
</dbReference>
<dbReference type="GO" id="GO:0046872">
    <property type="term" value="F:metal ion binding"/>
    <property type="evidence" value="ECO:0007669"/>
    <property type="project" value="UniProtKB-KW"/>
</dbReference>
<dbReference type="GO" id="GO:0008479">
    <property type="term" value="F:tRNA-guanosine(34) queuine transglycosylase activity"/>
    <property type="evidence" value="ECO:0007669"/>
    <property type="project" value="UniProtKB-UniRule"/>
</dbReference>
<dbReference type="GO" id="GO:0008616">
    <property type="term" value="P:queuosine biosynthetic process"/>
    <property type="evidence" value="ECO:0007669"/>
    <property type="project" value="UniProtKB-UniRule"/>
</dbReference>
<dbReference type="GO" id="GO:0002099">
    <property type="term" value="P:tRNA wobble guanine modification"/>
    <property type="evidence" value="ECO:0007669"/>
    <property type="project" value="TreeGrafter"/>
</dbReference>
<dbReference type="GO" id="GO:0101030">
    <property type="term" value="P:tRNA-guanine transglycosylation"/>
    <property type="evidence" value="ECO:0007669"/>
    <property type="project" value="InterPro"/>
</dbReference>
<dbReference type="FunFam" id="3.20.20.105:FF:000001">
    <property type="entry name" value="Queuine tRNA-ribosyltransferase"/>
    <property type="match status" value="1"/>
</dbReference>
<dbReference type="Gene3D" id="3.20.20.105">
    <property type="entry name" value="Queuine tRNA-ribosyltransferase-like"/>
    <property type="match status" value="1"/>
</dbReference>
<dbReference type="HAMAP" id="MF_00168">
    <property type="entry name" value="Q_tRNA_Tgt"/>
    <property type="match status" value="1"/>
</dbReference>
<dbReference type="InterPro" id="IPR050076">
    <property type="entry name" value="ArchSynthase1/Queuine_TRR"/>
</dbReference>
<dbReference type="InterPro" id="IPR004803">
    <property type="entry name" value="TGT"/>
</dbReference>
<dbReference type="InterPro" id="IPR036511">
    <property type="entry name" value="TGT-like_sf"/>
</dbReference>
<dbReference type="InterPro" id="IPR002616">
    <property type="entry name" value="tRNA_ribo_trans-like"/>
</dbReference>
<dbReference type="NCBIfam" id="TIGR00430">
    <property type="entry name" value="Q_tRNA_tgt"/>
    <property type="match status" value="1"/>
</dbReference>
<dbReference type="NCBIfam" id="TIGR00449">
    <property type="entry name" value="tgt_general"/>
    <property type="match status" value="1"/>
</dbReference>
<dbReference type="PANTHER" id="PTHR46499">
    <property type="entry name" value="QUEUINE TRNA-RIBOSYLTRANSFERASE"/>
    <property type="match status" value="1"/>
</dbReference>
<dbReference type="PANTHER" id="PTHR46499:SF1">
    <property type="entry name" value="QUEUINE TRNA-RIBOSYLTRANSFERASE"/>
    <property type="match status" value="1"/>
</dbReference>
<dbReference type="Pfam" id="PF01702">
    <property type="entry name" value="TGT"/>
    <property type="match status" value="1"/>
</dbReference>
<dbReference type="SUPFAM" id="SSF51713">
    <property type="entry name" value="tRNA-guanine transglycosylase"/>
    <property type="match status" value="1"/>
</dbReference>
<sequence length="384" mass="41900">MSRLQFQLQATDGAARRGQLSFPCGTVQTPAFMPVGTYGAVKGVLPGQLCDLGAEIILGNTFHLFLRPGLEVIADHGGLHGFMRWNGPILTDSGGFQVFSLAHRRKISEQGVTFAAPTDGAQVFLGPEESMKIQKVLNSDIVMIFDECTPYPATEDVARDSMELSLRWAQRSRDAHDALDNDAALFGIIQGGVHPDLRGRSLDGLQAIGFDGYGIGGLAVGESESERNVILEYLHPRVPADRPRYLMGVGRPEDLVESVARGVDMFDCVMPTRHARNGQYFTGFGTVKIRNACYARDVDPIEPGCGCPACVGGYTRAYLRHLDRCNEMLASMLGTLHNLWYYETLMANMRAAITAGTFFAFRRSFYLARGLDLPPLPEVAGCAG</sequence>
<reference key="1">
    <citation type="journal article" date="2000" name="Nature">
        <title>The genome sequence of the plant pathogen Xylella fastidiosa.</title>
        <authorList>
            <person name="Simpson A.J.G."/>
            <person name="Reinach F.C."/>
            <person name="Arruda P."/>
            <person name="Abreu F.A."/>
            <person name="Acencio M."/>
            <person name="Alvarenga R."/>
            <person name="Alves L.M.C."/>
            <person name="Araya J.E."/>
            <person name="Baia G.S."/>
            <person name="Baptista C.S."/>
            <person name="Barros M.H."/>
            <person name="Bonaccorsi E.D."/>
            <person name="Bordin S."/>
            <person name="Bove J.M."/>
            <person name="Briones M.R.S."/>
            <person name="Bueno M.R.P."/>
            <person name="Camargo A.A."/>
            <person name="Camargo L.E.A."/>
            <person name="Carraro D.M."/>
            <person name="Carrer H."/>
            <person name="Colauto N.B."/>
            <person name="Colombo C."/>
            <person name="Costa F.F."/>
            <person name="Costa M.C.R."/>
            <person name="Costa-Neto C.M."/>
            <person name="Coutinho L.L."/>
            <person name="Cristofani M."/>
            <person name="Dias-Neto E."/>
            <person name="Docena C."/>
            <person name="El-Dorry H."/>
            <person name="Facincani A.P."/>
            <person name="Ferreira A.J.S."/>
            <person name="Ferreira V.C.A."/>
            <person name="Ferro J.A."/>
            <person name="Fraga J.S."/>
            <person name="Franca S.C."/>
            <person name="Franco M.C."/>
            <person name="Frohme M."/>
            <person name="Furlan L.R."/>
            <person name="Garnier M."/>
            <person name="Goldman G.H."/>
            <person name="Goldman M.H.S."/>
            <person name="Gomes S.L."/>
            <person name="Gruber A."/>
            <person name="Ho P.L."/>
            <person name="Hoheisel J.D."/>
            <person name="Junqueira M.L."/>
            <person name="Kemper E.L."/>
            <person name="Kitajima J.P."/>
            <person name="Krieger J.E."/>
            <person name="Kuramae E.E."/>
            <person name="Laigret F."/>
            <person name="Lambais M.R."/>
            <person name="Leite L.C.C."/>
            <person name="Lemos E.G.M."/>
            <person name="Lemos M.V.F."/>
            <person name="Lopes S.A."/>
            <person name="Lopes C.R."/>
            <person name="Machado J.A."/>
            <person name="Machado M.A."/>
            <person name="Madeira A.M.B.N."/>
            <person name="Madeira H.M.F."/>
            <person name="Marino C.L."/>
            <person name="Marques M.V."/>
            <person name="Martins E.A.L."/>
            <person name="Martins E.M.F."/>
            <person name="Matsukuma A.Y."/>
            <person name="Menck C.F.M."/>
            <person name="Miracca E.C."/>
            <person name="Miyaki C.Y."/>
            <person name="Monteiro-Vitorello C.B."/>
            <person name="Moon D.H."/>
            <person name="Nagai M.A."/>
            <person name="Nascimento A.L.T.O."/>
            <person name="Netto L.E.S."/>
            <person name="Nhani A. Jr."/>
            <person name="Nobrega F.G."/>
            <person name="Nunes L.R."/>
            <person name="Oliveira M.A."/>
            <person name="de Oliveira M.C."/>
            <person name="de Oliveira R.C."/>
            <person name="Palmieri D.A."/>
            <person name="Paris A."/>
            <person name="Peixoto B.R."/>
            <person name="Pereira G.A.G."/>
            <person name="Pereira H.A. Jr."/>
            <person name="Pesquero J.B."/>
            <person name="Quaggio R.B."/>
            <person name="Roberto P.G."/>
            <person name="Rodrigues V."/>
            <person name="de Rosa A.J.M."/>
            <person name="de Rosa V.E. Jr."/>
            <person name="de Sa R.G."/>
            <person name="Santelli R.V."/>
            <person name="Sawasaki H.E."/>
            <person name="da Silva A.C.R."/>
            <person name="da Silva A.M."/>
            <person name="da Silva F.R."/>
            <person name="Silva W.A. Jr."/>
            <person name="da Silveira J.F."/>
            <person name="Silvestri M.L.Z."/>
            <person name="Siqueira W.J."/>
            <person name="de Souza A.A."/>
            <person name="de Souza A.P."/>
            <person name="Terenzi M.F."/>
            <person name="Truffi D."/>
            <person name="Tsai S.M."/>
            <person name="Tsuhako M.H."/>
            <person name="Vallada H."/>
            <person name="Van Sluys M.A."/>
            <person name="Verjovski-Almeida S."/>
            <person name="Vettore A.L."/>
            <person name="Zago M.A."/>
            <person name="Zatz M."/>
            <person name="Meidanis J."/>
            <person name="Setubal J.C."/>
        </authorList>
    </citation>
    <scope>NUCLEOTIDE SEQUENCE [LARGE SCALE GENOMIC DNA]</scope>
    <source>
        <strain>9a5c</strain>
    </source>
</reference>
<evidence type="ECO:0000255" key="1">
    <source>
        <dbReference type="HAMAP-Rule" id="MF_00168"/>
    </source>
</evidence>
<evidence type="ECO:0000305" key="2"/>
<keyword id="KW-0328">Glycosyltransferase</keyword>
<keyword id="KW-0479">Metal-binding</keyword>
<keyword id="KW-0671">Queuosine biosynthesis</keyword>
<keyword id="KW-0808">Transferase</keyword>
<keyword id="KW-0819">tRNA processing</keyword>
<keyword id="KW-0862">Zinc</keyword>
<name>TGT_XYLFA</name>